<reference key="1">
    <citation type="journal article" date="1993" name="Proc. Natl. Acad. Sci. U.S.A.">
        <title>Gastric DNA-binding proteins recognize upstream sequence motifs of parietal cell-specific genes.</title>
        <authorList>
            <person name="Tamura S."/>
            <person name="Wang X.H."/>
            <person name="Maeda M."/>
            <person name="Futai M."/>
        </authorList>
    </citation>
    <scope>NUCLEOTIDE SEQUENCE [MRNA]</scope>
    <source>
        <strain>Wistar</strain>
        <tissue>Stomach</tissue>
    </source>
</reference>
<reference key="2">
    <citation type="journal article" date="1994" name="Proc. Natl. Acad. Sci. U.S.A.">
        <authorList>
            <person name="Tamura S."/>
            <person name="Wang X.H."/>
            <person name="Maeda M."/>
            <person name="Futai M."/>
        </authorList>
    </citation>
    <scope>ERRATUM OF PUBMED:8248184</scope>
</reference>
<reference key="3">
    <citation type="journal article" date="2004" name="Development">
        <title>SMAD-mediated modulation of YY1 activity regulates the BMP response and cardiac-specific expression of a GATA4/5/6-dependent chick Nkx2.5 enhancer.</title>
        <authorList>
            <person name="Lee K.H."/>
            <person name="Evans S."/>
            <person name="Ruan T.Y."/>
            <person name="Lassar A.B."/>
        </authorList>
    </citation>
    <scope>FUNCTION</scope>
    <scope>DNA-BINDING</scope>
</reference>
<reference key="4">
    <citation type="journal article" date="2005" name="Mol. Cell. Biol.">
        <title>The zinc finger-only protein Zfp260 is a novel cardiac regulator and a nuclear effector of alpha1-adrenergic signaling.</title>
        <authorList>
            <person name="Debrus S."/>
            <person name="Rahbani L."/>
            <person name="Marttila M."/>
            <person name="Delorme B."/>
            <person name="Paradis P."/>
            <person name="Nemer M."/>
        </authorList>
    </citation>
    <scope>INTERACTION WITH ZNF260</scope>
</reference>
<protein>
    <recommendedName>
        <fullName>Transcription factor GATA-4</fullName>
    </recommendedName>
    <alternativeName>
        <fullName>DNA-binding protein GATA-GT2</fullName>
    </alternativeName>
    <alternativeName>
        <fullName>GATA-binding factor 4</fullName>
    </alternativeName>
</protein>
<comment type="function">
    <text evidence="2 3 6">Transcriptional activator that binds to the consensus sequence 5'-AGATAG-3' and plays a key role in cardiac development (By similarity). In cooperation with TBX5, it binds to cardiac super-enhancers and promotes cardiomyocyte gene expression, while it down-regulates endocardial and endothelial gene expression (By similarity). Acts as a transcriptional activator of ANF in cooperation with NKX2-5 (By similarity). Promotes cardiac myocyte enlargement (By similarity). Required during testicular development (By similarity). Involved in bone morphogenetic protein (BMP)-mediated induction of cardiac-specific gene expression (PubMed:15329343). Binds to BMP response element (BMPRE) DNA sequences within cardiac activating regions (PubMed:15329343). May play a role in sphingolipid signaling by regulating the expression of sphingosine-1-phosphate degrading enzyme, sphingosine-1-phosphate lyase (By similarity).</text>
</comment>
<comment type="subunit">
    <text evidence="2 3 7">Interacts with the homeobox domain of NKX2-5 through its C-terminal zinc finger. Also interacts with JARID2 which represses its ability to activate transcription of ANF. Interacts (via the second Zn finger) with NFATC4 (By similarity). Interacts with LMCD1 (By similarity). Forms a complex made of CDK9, CCNT1/cyclin-T1, EP300 and GATA4 that stimulates hypertrophy in cardiomyocytes. Interacts with NR5A1, ZFPM2 and TBX5. Interacts with ZNF260. Interacts with TBX18. Interacts with PHF7; the interaction promotes GATA4 binding to its transcription targets (By similarity).</text>
</comment>
<comment type="subcellular location">
    <subcellularLocation>
        <location evidence="2">Nucleus</location>
    </subcellularLocation>
</comment>
<comment type="tissue specificity">
    <text>Expressed predominantly in gastric mucosa and at much lower levels in the intestine. Also expressed in testis.</text>
</comment>
<comment type="PTM">
    <text evidence="1">Methylation at Lys-299 attenuates transcriptional activity.</text>
</comment>
<feature type="chain" id="PRO_0000083415" description="Transcription factor GATA-4">
    <location>
        <begin position="1"/>
        <end position="440"/>
    </location>
</feature>
<feature type="zinc finger region" description="GATA-type 1" evidence="4">
    <location>
        <begin position="216"/>
        <end position="240"/>
    </location>
</feature>
<feature type="zinc finger region" description="GATA-type 2" evidence="4">
    <location>
        <begin position="270"/>
        <end position="294"/>
    </location>
</feature>
<feature type="region of interest" description="Disordered" evidence="5">
    <location>
        <begin position="60"/>
        <end position="107"/>
    </location>
</feature>
<feature type="region of interest" description="Disordered" evidence="5">
    <location>
        <begin position="313"/>
        <end position="392"/>
    </location>
</feature>
<feature type="region of interest" description="Disordered" evidence="5">
    <location>
        <begin position="404"/>
        <end position="440"/>
    </location>
</feature>
<feature type="compositionally biased region" description="Gly residues" evidence="5">
    <location>
        <begin position="60"/>
        <end position="82"/>
    </location>
</feature>
<feature type="compositionally biased region" description="Basic residues" evidence="5">
    <location>
        <begin position="316"/>
        <end position="325"/>
    </location>
</feature>
<feature type="compositionally biased region" description="Low complexity" evidence="5">
    <location>
        <begin position="338"/>
        <end position="358"/>
    </location>
</feature>
<feature type="compositionally biased region" description="Low complexity" evidence="5">
    <location>
        <begin position="371"/>
        <end position="388"/>
    </location>
</feature>
<feature type="compositionally biased region" description="Polar residues" evidence="5">
    <location>
        <begin position="411"/>
        <end position="427"/>
    </location>
</feature>
<feature type="modified residue" description="N6-methyllysine; by EZH2" evidence="3">
    <location>
        <position position="299"/>
    </location>
</feature>
<sequence length="440" mass="44597">MYQSLAMAANHGPPPGAYEAGGPGAFMHSAGAASSPVYVPTPRVPSSVLGLSYLQGGGSGAASGATSGGSSGAGPSGAGPGTQQGSPGWSQAGAEGAAYTPPPVSPRFSFPGTTGSLAAAAAAAAAREAAAYSSSGGAAGAGLAGREQYGRPGFAGSYSSPYPAYMADVGASWAAAAAASAGPFDSPVLHSLPGRANPARHPNLDMFDDFSEGRECVNCGAMSTPLWRRDGTGHYLCNACGLYHKMNGINRPLIKPQRRLSASRRVGLSCANCQTTTTTLWRRNAEGEPVCNACGLYMKLHGVPRPLAMRKEGIQTRKRKPKNLNKSKTPAGPPGESLPPSSGASSNSSNATSSSSSSEEMRPIKTEPGLSSHYGHSSSMSQTFSTVSGHGSSIHPVLSALKLSPQGYPSPVTQTSQASSKQDSWNSLVLADSHGDIITA</sequence>
<evidence type="ECO:0000250" key="1"/>
<evidence type="ECO:0000250" key="2">
    <source>
        <dbReference type="UniProtKB" id="P43694"/>
    </source>
</evidence>
<evidence type="ECO:0000250" key="3">
    <source>
        <dbReference type="UniProtKB" id="Q08369"/>
    </source>
</evidence>
<evidence type="ECO:0000255" key="4">
    <source>
        <dbReference type="PROSITE-ProRule" id="PRU00094"/>
    </source>
</evidence>
<evidence type="ECO:0000256" key="5">
    <source>
        <dbReference type="SAM" id="MobiDB-lite"/>
    </source>
</evidence>
<evidence type="ECO:0000269" key="6">
    <source>
    </source>
</evidence>
<evidence type="ECO:0000269" key="7">
    <source>
    </source>
</evidence>
<proteinExistence type="evidence at protein level"/>
<dbReference type="EMBL" id="L22761">
    <property type="protein sequence ID" value="AAA16159.1"/>
    <property type="molecule type" value="mRNA"/>
</dbReference>
<dbReference type="PIR" id="I61183">
    <property type="entry name" value="I61183"/>
</dbReference>
<dbReference type="RefSeq" id="NP_653331.1">
    <property type="nucleotide sequence ID" value="NM_144730.1"/>
</dbReference>
<dbReference type="RefSeq" id="XP_063130659.1">
    <property type="nucleotide sequence ID" value="XM_063274589.1"/>
</dbReference>
<dbReference type="SMR" id="P46152"/>
<dbReference type="BioGRID" id="248477">
    <property type="interactions" value="17"/>
</dbReference>
<dbReference type="DIP" id="DIP-60791N"/>
<dbReference type="FunCoup" id="P46152">
    <property type="interactions" value="243"/>
</dbReference>
<dbReference type="IntAct" id="P46152">
    <property type="interactions" value="3"/>
</dbReference>
<dbReference type="MINT" id="P46152"/>
<dbReference type="STRING" id="10116.ENSRNOP00000014320"/>
<dbReference type="ChEMBL" id="CHEMBL4105727"/>
<dbReference type="iPTMnet" id="P46152"/>
<dbReference type="PhosphoSitePlus" id="P46152"/>
<dbReference type="PaxDb" id="10116-ENSRNOP00000014320"/>
<dbReference type="Ensembl" id="ENSRNOT00000014320.6">
    <property type="protein sequence ID" value="ENSRNOP00000014320.3"/>
    <property type="gene ID" value="ENSRNOG00000010708.8"/>
</dbReference>
<dbReference type="GeneID" id="54254"/>
<dbReference type="KEGG" id="rno:54254"/>
<dbReference type="UCSC" id="RGD:2665">
    <property type="organism name" value="rat"/>
</dbReference>
<dbReference type="AGR" id="RGD:2665"/>
<dbReference type="CTD" id="2626"/>
<dbReference type="RGD" id="2665">
    <property type="gene designation" value="Gata4"/>
</dbReference>
<dbReference type="eggNOG" id="KOG1601">
    <property type="taxonomic scope" value="Eukaryota"/>
</dbReference>
<dbReference type="GeneTree" id="ENSGT00940000158349"/>
<dbReference type="HOGENOM" id="CLU_027524_0_0_1"/>
<dbReference type="InParanoid" id="P46152"/>
<dbReference type="OMA" id="MANHGPP"/>
<dbReference type="OrthoDB" id="515401at2759"/>
<dbReference type="PhylomeDB" id="P46152"/>
<dbReference type="Reactome" id="R-RNO-983231">
    <property type="pathway name" value="Factors involved in megakaryocyte development and platelet production"/>
</dbReference>
<dbReference type="PRO" id="PR:P46152"/>
<dbReference type="Proteomes" id="UP000002494">
    <property type="component" value="Chromosome 15"/>
</dbReference>
<dbReference type="Bgee" id="ENSRNOG00000010708">
    <property type="expression patterns" value="Expressed in stomach and 10 other cell types or tissues"/>
</dbReference>
<dbReference type="GO" id="GO:0000785">
    <property type="term" value="C:chromatin"/>
    <property type="evidence" value="ECO:0000266"/>
    <property type="project" value="RGD"/>
</dbReference>
<dbReference type="GO" id="GO:0016604">
    <property type="term" value="C:nuclear body"/>
    <property type="evidence" value="ECO:0007669"/>
    <property type="project" value="Ensembl"/>
</dbReference>
<dbReference type="GO" id="GO:0005634">
    <property type="term" value="C:nucleus"/>
    <property type="evidence" value="ECO:0000266"/>
    <property type="project" value="RGD"/>
</dbReference>
<dbReference type="GO" id="GO:0090575">
    <property type="term" value="C:RNA polymerase II transcription regulator complex"/>
    <property type="evidence" value="ECO:0000266"/>
    <property type="project" value="RGD"/>
</dbReference>
<dbReference type="GO" id="GO:0003682">
    <property type="term" value="F:chromatin binding"/>
    <property type="evidence" value="ECO:0000266"/>
    <property type="project" value="RGD"/>
</dbReference>
<dbReference type="GO" id="GO:0000987">
    <property type="term" value="F:cis-regulatory region sequence-specific DNA binding"/>
    <property type="evidence" value="ECO:0000314"/>
    <property type="project" value="UniProtKB"/>
</dbReference>
<dbReference type="GO" id="GO:0070410">
    <property type="term" value="F:co-SMAD binding"/>
    <property type="evidence" value="ECO:0000266"/>
    <property type="project" value="RGD"/>
</dbReference>
<dbReference type="GO" id="GO:0003677">
    <property type="term" value="F:DNA binding"/>
    <property type="evidence" value="ECO:0000314"/>
    <property type="project" value="BHF-UCL"/>
</dbReference>
<dbReference type="GO" id="GO:0001216">
    <property type="term" value="F:DNA-binding transcription activator activity"/>
    <property type="evidence" value="ECO:0000266"/>
    <property type="project" value="RGD"/>
</dbReference>
<dbReference type="GO" id="GO:0001228">
    <property type="term" value="F:DNA-binding transcription activator activity, RNA polymerase II-specific"/>
    <property type="evidence" value="ECO:0000266"/>
    <property type="project" value="RGD"/>
</dbReference>
<dbReference type="GO" id="GO:0003700">
    <property type="term" value="F:DNA-binding transcription factor activity"/>
    <property type="evidence" value="ECO:0000266"/>
    <property type="project" value="RGD"/>
</dbReference>
<dbReference type="GO" id="GO:0000981">
    <property type="term" value="F:DNA-binding transcription factor activity, RNA polymerase II-specific"/>
    <property type="evidence" value="ECO:0000314"/>
    <property type="project" value="BHF-UCL"/>
</dbReference>
<dbReference type="GO" id="GO:0140297">
    <property type="term" value="F:DNA-binding transcription factor binding"/>
    <property type="evidence" value="ECO:0000353"/>
    <property type="project" value="UniProtKB"/>
</dbReference>
<dbReference type="GO" id="GO:0051525">
    <property type="term" value="F:NFAT protein binding"/>
    <property type="evidence" value="ECO:0000353"/>
    <property type="project" value="RGD"/>
</dbReference>
<dbReference type="GO" id="GO:0019901">
    <property type="term" value="F:protein kinase binding"/>
    <property type="evidence" value="ECO:0000353"/>
    <property type="project" value="RGD"/>
</dbReference>
<dbReference type="GO" id="GO:0000978">
    <property type="term" value="F:RNA polymerase II cis-regulatory region sequence-specific DNA binding"/>
    <property type="evidence" value="ECO:0000266"/>
    <property type="project" value="RGD"/>
</dbReference>
<dbReference type="GO" id="GO:0000977">
    <property type="term" value="F:RNA polymerase II transcription regulatory region sequence-specific DNA binding"/>
    <property type="evidence" value="ECO:0000266"/>
    <property type="project" value="RGD"/>
</dbReference>
<dbReference type="GO" id="GO:0061629">
    <property type="term" value="F:RNA polymerase II-specific DNA-binding transcription factor binding"/>
    <property type="evidence" value="ECO:0000353"/>
    <property type="project" value="BHF-UCL"/>
</dbReference>
<dbReference type="GO" id="GO:0043565">
    <property type="term" value="F:sequence-specific DNA binding"/>
    <property type="evidence" value="ECO:0000315"/>
    <property type="project" value="RGD"/>
</dbReference>
<dbReference type="GO" id="GO:1990837">
    <property type="term" value="F:sequence-specific double-stranded DNA binding"/>
    <property type="evidence" value="ECO:0000266"/>
    <property type="project" value="RGD"/>
</dbReference>
<dbReference type="GO" id="GO:0000976">
    <property type="term" value="F:transcription cis-regulatory region binding"/>
    <property type="evidence" value="ECO:0000314"/>
    <property type="project" value="BHF-UCL"/>
</dbReference>
<dbReference type="GO" id="GO:0001223">
    <property type="term" value="F:transcription coactivator binding"/>
    <property type="evidence" value="ECO:0000266"/>
    <property type="project" value="RGD"/>
</dbReference>
<dbReference type="GO" id="GO:0008270">
    <property type="term" value="F:zinc ion binding"/>
    <property type="evidence" value="ECO:0000304"/>
    <property type="project" value="RGD"/>
</dbReference>
<dbReference type="GO" id="GO:0003180">
    <property type="term" value="P:aortic valve morphogenesis"/>
    <property type="evidence" value="ECO:0000266"/>
    <property type="project" value="RGD"/>
</dbReference>
<dbReference type="GO" id="GO:0060413">
    <property type="term" value="P:atrial septum morphogenesis"/>
    <property type="evidence" value="ECO:0000266"/>
    <property type="project" value="RGD"/>
</dbReference>
<dbReference type="GO" id="GO:0003289">
    <property type="term" value="P:atrial septum primum morphogenesis"/>
    <property type="evidence" value="ECO:0000266"/>
    <property type="project" value="RGD"/>
</dbReference>
<dbReference type="GO" id="GO:0003290">
    <property type="term" value="P:atrial septum secundum morphogenesis"/>
    <property type="evidence" value="ECO:0000266"/>
    <property type="project" value="RGD"/>
</dbReference>
<dbReference type="GO" id="GO:0036302">
    <property type="term" value="P:atrioventricular canal development"/>
    <property type="evidence" value="ECO:0000266"/>
    <property type="project" value="RGD"/>
</dbReference>
<dbReference type="GO" id="GO:0003190">
    <property type="term" value="P:atrioventricular valve formation"/>
    <property type="evidence" value="ECO:0000266"/>
    <property type="project" value="RGD"/>
</dbReference>
<dbReference type="GO" id="GO:0003181">
    <property type="term" value="P:atrioventricular valve morphogenesis"/>
    <property type="evidence" value="ECO:0000266"/>
    <property type="project" value="RGD"/>
</dbReference>
<dbReference type="GO" id="GO:0055007">
    <property type="term" value="P:cardiac muscle cell differentiation"/>
    <property type="evidence" value="ECO:0000270"/>
    <property type="project" value="RGD"/>
</dbReference>
<dbReference type="GO" id="GO:0060038">
    <property type="term" value="P:cardiac muscle cell proliferation"/>
    <property type="evidence" value="ECO:0000266"/>
    <property type="project" value="RGD"/>
</dbReference>
<dbReference type="GO" id="GO:0014898">
    <property type="term" value="P:cardiac muscle hypertrophy in response to stress"/>
    <property type="evidence" value="ECO:0000266"/>
    <property type="project" value="RGD"/>
</dbReference>
<dbReference type="GO" id="GO:0048738">
    <property type="term" value="P:cardiac muscle tissue development"/>
    <property type="evidence" value="ECO:0000266"/>
    <property type="project" value="RGD"/>
</dbReference>
<dbReference type="GO" id="GO:0061026">
    <property type="term" value="P:cardiac muscle tissue regeneration"/>
    <property type="evidence" value="ECO:0000266"/>
    <property type="project" value="RGD"/>
</dbReference>
<dbReference type="GO" id="GO:0003215">
    <property type="term" value="P:cardiac right ventricle morphogenesis"/>
    <property type="evidence" value="ECO:0000266"/>
    <property type="project" value="RGD"/>
</dbReference>
<dbReference type="GO" id="GO:0003279">
    <property type="term" value="P:cardiac septum development"/>
    <property type="evidence" value="ECO:0000266"/>
    <property type="project" value="RGD"/>
</dbReference>
<dbReference type="GO" id="GO:0045165">
    <property type="term" value="P:cell fate commitment"/>
    <property type="evidence" value="ECO:0000318"/>
    <property type="project" value="GO_Central"/>
</dbReference>
<dbReference type="GO" id="GO:0061049">
    <property type="term" value="P:cell growth involved in cardiac muscle cell development"/>
    <property type="evidence" value="ECO:0000314"/>
    <property type="project" value="RGD"/>
</dbReference>
<dbReference type="GO" id="GO:0007267">
    <property type="term" value="P:cell-cell signaling"/>
    <property type="evidence" value="ECO:0000266"/>
    <property type="project" value="RGD"/>
</dbReference>
<dbReference type="GO" id="GO:0071372">
    <property type="term" value="P:cellular response to follicle-stimulating hormone stimulus"/>
    <property type="evidence" value="ECO:0000266"/>
    <property type="project" value="RGD"/>
</dbReference>
<dbReference type="GO" id="GO:0071333">
    <property type="term" value="P:cellular response to glucose stimulus"/>
    <property type="evidence" value="ECO:0000270"/>
    <property type="project" value="RGD"/>
</dbReference>
<dbReference type="GO" id="GO:0071371">
    <property type="term" value="P:cellular response to gonadotropin stimulus"/>
    <property type="evidence" value="ECO:0000266"/>
    <property type="project" value="RGD"/>
</dbReference>
<dbReference type="GO" id="GO:0048557">
    <property type="term" value="P:embryonic digestive tract morphogenesis"/>
    <property type="evidence" value="ECO:0000266"/>
    <property type="project" value="RGD"/>
</dbReference>
<dbReference type="GO" id="GO:0048617">
    <property type="term" value="P:embryonic foregut morphogenesis"/>
    <property type="evidence" value="ECO:0000266"/>
    <property type="project" value="RGD"/>
</dbReference>
<dbReference type="GO" id="GO:0035054">
    <property type="term" value="P:embryonic heart tube anterior/posterior pattern specification"/>
    <property type="evidence" value="ECO:0000266"/>
    <property type="project" value="RGD"/>
</dbReference>
<dbReference type="GO" id="GO:0035050">
    <property type="term" value="P:embryonic heart tube development"/>
    <property type="evidence" value="ECO:0000266"/>
    <property type="project" value="RGD"/>
</dbReference>
<dbReference type="GO" id="GO:0048598">
    <property type="term" value="P:embryonic morphogenesis"/>
    <property type="evidence" value="ECO:0000266"/>
    <property type="project" value="RGD"/>
</dbReference>
<dbReference type="GO" id="GO:0003197">
    <property type="term" value="P:endocardial cushion development"/>
    <property type="evidence" value="ECO:0000266"/>
    <property type="project" value="RGD"/>
</dbReference>
<dbReference type="GO" id="GO:0001706">
    <property type="term" value="P:endoderm formation"/>
    <property type="evidence" value="ECO:0000266"/>
    <property type="project" value="RGD"/>
</dbReference>
<dbReference type="GO" id="GO:0072148">
    <property type="term" value="P:epithelial cell fate commitment"/>
    <property type="evidence" value="ECO:0000266"/>
    <property type="project" value="RGD"/>
</dbReference>
<dbReference type="GO" id="GO:0001702">
    <property type="term" value="P:gastrulation with mouth forming second"/>
    <property type="evidence" value="ECO:0000266"/>
    <property type="project" value="RGD"/>
</dbReference>
<dbReference type="GO" id="GO:0007507">
    <property type="term" value="P:heart development"/>
    <property type="evidence" value="ECO:0000266"/>
    <property type="project" value="RGD"/>
</dbReference>
<dbReference type="GO" id="GO:0001947">
    <property type="term" value="P:heart looping"/>
    <property type="evidence" value="ECO:0000266"/>
    <property type="project" value="RGD"/>
</dbReference>
<dbReference type="GO" id="GO:0003007">
    <property type="term" value="P:heart morphogenesis"/>
    <property type="evidence" value="ECO:0000266"/>
    <property type="project" value="RGD"/>
</dbReference>
<dbReference type="GO" id="GO:0001701">
    <property type="term" value="P:in utero embryonic development"/>
    <property type="evidence" value="ECO:0000266"/>
    <property type="project" value="RGD"/>
</dbReference>
<dbReference type="GO" id="GO:0060575">
    <property type="term" value="P:intestinal epithelial cell differentiation"/>
    <property type="evidence" value="ECO:0000266"/>
    <property type="project" value="RGD"/>
</dbReference>
<dbReference type="GO" id="GO:0060464">
    <property type="term" value="P:lung lobe formation"/>
    <property type="evidence" value="ECO:0000266"/>
    <property type="project" value="RGD"/>
</dbReference>
<dbReference type="GO" id="GO:0008584">
    <property type="term" value="P:male gonad development"/>
    <property type="evidence" value="ECO:0000266"/>
    <property type="project" value="RGD"/>
</dbReference>
<dbReference type="GO" id="GO:0043066">
    <property type="term" value="P:negative regulation of apoptotic process"/>
    <property type="evidence" value="ECO:0000266"/>
    <property type="project" value="RGD"/>
</dbReference>
<dbReference type="GO" id="GO:2001234">
    <property type="term" value="P:negative regulation of apoptotic signaling pathway"/>
    <property type="evidence" value="ECO:0000266"/>
    <property type="project" value="RGD"/>
</dbReference>
<dbReference type="GO" id="GO:0010507">
    <property type="term" value="P:negative regulation of autophagy"/>
    <property type="evidence" value="ECO:0000315"/>
    <property type="project" value="RGD"/>
</dbReference>
<dbReference type="GO" id="GO:0010667">
    <property type="term" value="P:negative regulation of cardiac muscle cell apoptotic process"/>
    <property type="evidence" value="ECO:0000266"/>
    <property type="project" value="RGD"/>
</dbReference>
<dbReference type="GO" id="GO:1905204">
    <property type="term" value="P:negative regulation of connective tissue replacement"/>
    <property type="evidence" value="ECO:0000266"/>
    <property type="project" value="RGD"/>
</dbReference>
<dbReference type="GO" id="GO:0010629">
    <property type="term" value="P:negative regulation of gene expression"/>
    <property type="evidence" value="ECO:0000266"/>
    <property type="project" value="RGD"/>
</dbReference>
<dbReference type="GO" id="GO:1902176">
    <property type="term" value="P:negative regulation of oxidative stress-induced intrinsic apoptotic signaling pathway"/>
    <property type="evidence" value="ECO:0000266"/>
    <property type="project" value="RGD"/>
</dbReference>
<dbReference type="GO" id="GO:0000122">
    <property type="term" value="P:negative regulation of transcription by RNA polymerase II"/>
    <property type="evidence" value="ECO:0000318"/>
    <property type="project" value="GO_Central"/>
</dbReference>
<dbReference type="GO" id="GO:0045766">
    <property type="term" value="P:positive regulation of angiogenesis"/>
    <property type="evidence" value="ECO:0000266"/>
    <property type="project" value="RGD"/>
</dbReference>
<dbReference type="GO" id="GO:0030513">
    <property type="term" value="P:positive regulation of BMP signaling pathway"/>
    <property type="evidence" value="ECO:0000314"/>
    <property type="project" value="BHF-UCL"/>
</dbReference>
<dbReference type="GO" id="GO:0060045">
    <property type="term" value="P:positive regulation of cardiac muscle cell proliferation"/>
    <property type="evidence" value="ECO:0000266"/>
    <property type="project" value="RGD"/>
</dbReference>
<dbReference type="GO" id="GO:0045787">
    <property type="term" value="P:positive regulation of cell cycle"/>
    <property type="evidence" value="ECO:0000266"/>
    <property type="project" value="RGD"/>
</dbReference>
<dbReference type="GO" id="GO:0045893">
    <property type="term" value="P:positive regulation of DNA-templated transcription"/>
    <property type="evidence" value="ECO:0000250"/>
    <property type="project" value="UniProtKB"/>
</dbReference>
<dbReference type="GO" id="GO:0010628">
    <property type="term" value="P:positive regulation of gene expression"/>
    <property type="evidence" value="ECO:0000266"/>
    <property type="project" value="RGD"/>
</dbReference>
<dbReference type="GO" id="GO:1902895">
    <property type="term" value="P:positive regulation of miRNA transcription"/>
    <property type="evidence" value="ECO:0000266"/>
    <property type="project" value="RGD"/>
</dbReference>
<dbReference type="GO" id="GO:0045944">
    <property type="term" value="P:positive regulation of transcription by RNA polymerase II"/>
    <property type="evidence" value="ECO:0000314"/>
    <property type="project" value="RGD"/>
</dbReference>
<dbReference type="GO" id="GO:0010575">
    <property type="term" value="P:positive regulation of vascular endothelial growth factor production"/>
    <property type="evidence" value="ECO:0000266"/>
    <property type="project" value="RGD"/>
</dbReference>
<dbReference type="GO" id="GO:0086004">
    <property type="term" value="P:regulation of cardiac muscle cell contraction"/>
    <property type="evidence" value="ECO:0000315"/>
    <property type="project" value="RGD"/>
</dbReference>
<dbReference type="GO" id="GO:0060043">
    <property type="term" value="P:regulation of cardiac muscle cell proliferation"/>
    <property type="evidence" value="ECO:0000266"/>
    <property type="project" value="RGD"/>
</dbReference>
<dbReference type="GO" id="GO:0006355">
    <property type="term" value="P:regulation of DNA-templated transcription"/>
    <property type="evidence" value="ECO:0000314"/>
    <property type="project" value="RGD"/>
</dbReference>
<dbReference type="GO" id="GO:0010468">
    <property type="term" value="P:regulation of gene expression"/>
    <property type="evidence" value="ECO:0000266"/>
    <property type="project" value="RGD"/>
</dbReference>
<dbReference type="GO" id="GO:0006357">
    <property type="term" value="P:regulation of transcription by RNA polymerase II"/>
    <property type="evidence" value="ECO:0000266"/>
    <property type="project" value="RGD"/>
</dbReference>
<dbReference type="GO" id="GO:0043627">
    <property type="term" value="P:response to estrogen"/>
    <property type="evidence" value="ECO:0000266"/>
    <property type="project" value="RGD"/>
</dbReference>
<dbReference type="GO" id="GO:0009612">
    <property type="term" value="P:response to mechanical stimulus"/>
    <property type="evidence" value="ECO:0000314"/>
    <property type="project" value="RGD"/>
</dbReference>
<dbReference type="GO" id="GO:0032526">
    <property type="term" value="P:response to retinoic acid"/>
    <property type="evidence" value="ECO:0000266"/>
    <property type="project" value="RGD"/>
</dbReference>
<dbReference type="GO" id="GO:0033189">
    <property type="term" value="P:response to vitamin A"/>
    <property type="evidence" value="ECO:0000270"/>
    <property type="project" value="RGD"/>
</dbReference>
<dbReference type="GO" id="GO:0009410">
    <property type="term" value="P:response to xenobiotic stimulus"/>
    <property type="evidence" value="ECO:0000266"/>
    <property type="project" value="RGD"/>
</dbReference>
<dbReference type="GO" id="GO:0072520">
    <property type="term" value="P:seminiferous tubule development"/>
    <property type="evidence" value="ECO:0000266"/>
    <property type="project" value="RGD"/>
</dbReference>
<dbReference type="GO" id="GO:0060008">
    <property type="term" value="P:Sertoli cell differentiation"/>
    <property type="evidence" value="ECO:0000266"/>
    <property type="project" value="RGD"/>
</dbReference>
<dbReference type="GO" id="GO:0023019">
    <property type="term" value="P:signal transduction involved in regulation of gene expression"/>
    <property type="evidence" value="ECO:0000266"/>
    <property type="project" value="RGD"/>
</dbReference>
<dbReference type="GO" id="GO:0007283">
    <property type="term" value="P:spermatogenesis"/>
    <property type="evidence" value="ECO:0000266"/>
    <property type="project" value="RGD"/>
</dbReference>
<dbReference type="GO" id="GO:0060290">
    <property type="term" value="P:transdifferentiation"/>
    <property type="evidence" value="ECO:0000315"/>
    <property type="project" value="RGD"/>
</dbReference>
<dbReference type="GO" id="GO:0035239">
    <property type="term" value="P:tube morphogenesis"/>
    <property type="evidence" value="ECO:0000266"/>
    <property type="project" value="RGD"/>
</dbReference>
<dbReference type="GO" id="GO:0003229">
    <property type="term" value="P:ventricular cardiac muscle tissue development"/>
    <property type="evidence" value="ECO:0000266"/>
    <property type="project" value="RGD"/>
</dbReference>
<dbReference type="GO" id="GO:0003281">
    <property type="term" value="P:ventricular septum development"/>
    <property type="evidence" value="ECO:0000266"/>
    <property type="project" value="RGD"/>
</dbReference>
<dbReference type="GO" id="GO:0042060">
    <property type="term" value="P:wound healing"/>
    <property type="evidence" value="ECO:0000266"/>
    <property type="project" value="RGD"/>
</dbReference>
<dbReference type="CDD" id="cd00202">
    <property type="entry name" value="ZnF_GATA"/>
    <property type="match status" value="2"/>
</dbReference>
<dbReference type="FunFam" id="3.30.50.10:FF:000001">
    <property type="entry name" value="GATA transcription factor (GATAd)"/>
    <property type="match status" value="1"/>
</dbReference>
<dbReference type="FunFam" id="3.30.50.10:FF:000032">
    <property type="entry name" value="Transcription factor GATA-3"/>
    <property type="match status" value="1"/>
</dbReference>
<dbReference type="Gene3D" id="3.30.50.10">
    <property type="entry name" value="Erythroid Transcription Factor GATA-1, subunit A"/>
    <property type="match status" value="2"/>
</dbReference>
<dbReference type="InterPro" id="IPR008013">
    <property type="entry name" value="GATA_N"/>
</dbReference>
<dbReference type="InterPro" id="IPR016375">
    <property type="entry name" value="TF_GATA_4/5/6"/>
</dbReference>
<dbReference type="InterPro" id="IPR039355">
    <property type="entry name" value="Transcription_factor_GATA"/>
</dbReference>
<dbReference type="InterPro" id="IPR000679">
    <property type="entry name" value="Znf_GATA"/>
</dbReference>
<dbReference type="InterPro" id="IPR013088">
    <property type="entry name" value="Znf_NHR/GATA"/>
</dbReference>
<dbReference type="PANTHER" id="PTHR10071">
    <property type="entry name" value="TRANSCRIPTION FACTOR GATA FAMILY MEMBER"/>
    <property type="match status" value="1"/>
</dbReference>
<dbReference type="PANTHER" id="PTHR10071:SF154">
    <property type="entry name" value="TRANSCRIPTION FACTOR GATA-4"/>
    <property type="match status" value="1"/>
</dbReference>
<dbReference type="Pfam" id="PF00320">
    <property type="entry name" value="GATA"/>
    <property type="match status" value="2"/>
</dbReference>
<dbReference type="Pfam" id="PF05349">
    <property type="entry name" value="GATA-N"/>
    <property type="match status" value="1"/>
</dbReference>
<dbReference type="PIRSF" id="PIRSF003028">
    <property type="entry name" value="TF_GATA_4/5/6"/>
    <property type="match status" value="1"/>
</dbReference>
<dbReference type="PRINTS" id="PR00619">
    <property type="entry name" value="GATAZNFINGER"/>
</dbReference>
<dbReference type="SMART" id="SM00401">
    <property type="entry name" value="ZnF_GATA"/>
    <property type="match status" value="2"/>
</dbReference>
<dbReference type="SUPFAM" id="SSF57716">
    <property type="entry name" value="Glucocorticoid receptor-like (DNA-binding domain)"/>
    <property type="match status" value="2"/>
</dbReference>
<dbReference type="PROSITE" id="PS00344">
    <property type="entry name" value="GATA_ZN_FINGER_1"/>
    <property type="match status" value="2"/>
</dbReference>
<dbReference type="PROSITE" id="PS50114">
    <property type="entry name" value="GATA_ZN_FINGER_2"/>
    <property type="match status" value="2"/>
</dbReference>
<name>GATA4_RAT</name>
<organism>
    <name type="scientific">Rattus norvegicus</name>
    <name type="common">Rat</name>
    <dbReference type="NCBI Taxonomy" id="10116"/>
    <lineage>
        <taxon>Eukaryota</taxon>
        <taxon>Metazoa</taxon>
        <taxon>Chordata</taxon>
        <taxon>Craniata</taxon>
        <taxon>Vertebrata</taxon>
        <taxon>Euteleostomi</taxon>
        <taxon>Mammalia</taxon>
        <taxon>Eutheria</taxon>
        <taxon>Euarchontoglires</taxon>
        <taxon>Glires</taxon>
        <taxon>Rodentia</taxon>
        <taxon>Myomorpha</taxon>
        <taxon>Muroidea</taxon>
        <taxon>Muridae</taxon>
        <taxon>Murinae</taxon>
        <taxon>Rattus</taxon>
    </lineage>
</organism>
<keyword id="KW-0010">Activator</keyword>
<keyword id="KW-0238">DNA-binding</keyword>
<keyword id="KW-0479">Metal-binding</keyword>
<keyword id="KW-0488">Methylation</keyword>
<keyword id="KW-0539">Nucleus</keyword>
<keyword id="KW-1185">Reference proteome</keyword>
<keyword id="KW-0677">Repeat</keyword>
<keyword id="KW-0804">Transcription</keyword>
<keyword id="KW-0805">Transcription regulation</keyword>
<keyword id="KW-0862">Zinc</keyword>
<keyword id="KW-0863">Zinc-finger</keyword>
<accession>P46152</accession>
<gene>
    <name type="primary">Gata4</name>
</gene>